<feature type="transit peptide" description="Mitochondrion" evidence="2">
    <location>
        <begin position="1"/>
        <end position="35"/>
    </location>
</feature>
<feature type="chain" id="PRO_0000390794" description="Succinate-semialdehyde dehydrogenase, mitochondrial">
    <location>
        <begin position="36"/>
        <end position="527"/>
    </location>
</feature>
<feature type="active site" description="Proton acceptor" evidence="3 4">
    <location>
        <position position="298"/>
    </location>
</feature>
<feature type="active site" description="Nucleophile" evidence="3 4">
    <location>
        <position position="332"/>
    </location>
</feature>
<feature type="binding site" evidence="1">
    <location>
        <position position="208"/>
    </location>
    <ligand>
        <name>NAD(+)</name>
        <dbReference type="ChEBI" id="CHEBI:57540"/>
    </ligand>
</feature>
<feature type="binding site" evidence="1">
    <location>
        <position position="208"/>
    </location>
    <ligand>
        <name>substrate</name>
    </ligand>
</feature>
<feature type="binding site" evidence="1">
    <location>
        <begin position="223"/>
        <end position="226"/>
    </location>
    <ligand>
        <name>NAD(+)</name>
        <dbReference type="ChEBI" id="CHEBI:57540"/>
    </ligand>
</feature>
<feature type="binding site" evidence="1">
    <location>
        <begin position="276"/>
        <end position="281"/>
    </location>
    <ligand>
        <name>NAD(+)</name>
        <dbReference type="ChEBI" id="CHEBI:57540"/>
    </ligand>
</feature>
<feature type="binding site" evidence="1">
    <location>
        <position position="326"/>
    </location>
    <ligand>
        <name>substrate</name>
    </ligand>
</feature>
<feature type="binding site" evidence="1">
    <location>
        <position position="332"/>
    </location>
    <ligand>
        <name>substrate</name>
    </ligand>
</feature>
<feature type="binding site" evidence="1">
    <location>
        <position position="489"/>
    </location>
    <ligand>
        <name>substrate</name>
    </ligand>
</feature>
<feature type="site" description="Transition state stabilizer" evidence="1">
    <location>
        <position position="200"/>
    </location>
</feature>
<feature type="disulfide bond" description="In inhibited form" evidence="1">
    <location>
        <begin position="332"/>
        <end position="334"/>
    </location>
</feature>
<sequence length="527" mass="56094">MAMAMAMRRAAALGARHILAASSTSSSGVLLRRHMSVDAGAAMEKVRAAGLLRTQGLIGGKWVDAYDGKTIEVQNPATGETLANVSCMGSKETSDAIASAHSTFYSWSKLTANERSKALRKWHDLIISHKEELALLMTLEQGKPMKEALVEVTYGASFIEYFAEEAKRIYGDIIPPTLSDRRLLVLKQPVGVVGAVTPWNFPLAMITRKVGPALACGCTVVVKPSEFTPLTALAAADLALQAGIPAGAINVVMGNAPEIGDALLQSTQVRKITFTGSTAVGKKLMAGSANTVKKVSLELGGNAPCIVFDDADIDVAIKGSLAAKFRNSGQTCVCANRILVQEGIYEKFASAFIKAVQSLKVGNGLEESTSQGPLINEAAVQKVEKFINDATSKGANIMLGGKRHSLGMSFYEPTVVGNVSNDMLLFREEVFGPVAPLVPFKTEEDAIRMANDTNAGLAAYIFTKSIPRSWRVSEALEYGLVGVNEGIISTEVAPFGGVKQSGLGREGSKYGMDEYLELKYICMGNLN</sequence>
<comment type="function">
    <text evidence="1">Oxidizes specifically succinate semialdehyde. Involved in plant response to environmental stress by preventing the accumulation of reactive oxygen species (By similarity).</text>
</comment>
<comment type="catalytic activity">
    <reaction>
        <text>succinate semialdehyde + NAD(+) + H2O = succinate + NADH + 2 H(+)</text>
        <dbReference type="Rhea" id="RHEA:13217"/>
        <dbReference type="ChEBI" id="CHEBI:15377"/>
        <dbReference type="ChEBI" id="CHEBI:15378"/>
        <dbReference type="ChEBI" id="CHEBI:30031"/>
        <dbReference type="ChEBI" id="CHEBI:57540"/>
        <dbReference type="ChEBI" id="CHEBI:57706"/>
        <dbReference type="ChEBI" id="CHEBI:57945"/>
        <dbReference type="EC" id="1.2.1.24"/>
    </reaction>
</comment>
<comment type="activity regulation">
    <text evidence="1">Redox-regulated. Inhibited under oxydizing conditions (By similarity).</text>
</comment>
<comment type="pathway">
    <text>Amino-acid degradation; 4-aminobutanoate degradation.</text>
</comment>
<comment type="subunit">
    <text evidence="1">Homotetramer.</text>
</comment>
<comment type="subcellular location">
    <subcellularLocation>
        <location>Mitochondrion matrix</location>
    </subcellularLocation>
</comment>
<comment type="similarity">
    <text evidence="5">Belongs to the aldehyde dehydrogenase family.</text>
</comment>
<comment type="sequence caution" evidence="5">
    <conflict type="erroneous gene model prediction">
        <sequence resource="EMBL-CDS" id="BAH91555"/>
    </conflict>
</comment>
<organism>
    <name type="scientific">Oryza sativa subsp. japonica</name>
    <name type="common">Rice</name>
    <dbReference type="NCBI Taxonomy" id="39947"/>
    <lineage>
        <taxon>Eukaryota</taxon>
        <taxon>Viridiplantae</taxon>
        <taxon>Streptophyta</taxon>
        <taxon>Embryophyta</taxon>
        <taxon>Tracheophyta</taxon>
        <taxon>Spermatophyta</taxon>
        <taxon>Magnoliopsida</taxon>
        <taxon>Liliopsida</taxon>
        <taxon>Poales</taxon>
        <taxon>Poaceae</taxon>
        <taxon>BOP clade</taxon>
        <taxon>Oryzoideae</taxon>
        <taxon>Oryzeae</taxon>
        <taxon>Oryzinae</taxon>
        <taxon>Oryza</taxon>
        <taxon>Oryza sativa</taxon>
    </lineage>
</organism>
<accession>B9F3B6</accession>
<accession>C7IY98</accession>
<gene>
    <name type="primary">ALDH5F1</name>
    <name type="synonym">SSADH1</name>
    <name type="ordered locus">Os02g0173900</name>
    <name type="ordered locus">LOC_Os02g07760</name>
    <name type="ORF">OsJ_05574</name>
</gene>
<keyword id="KW-1015">Disulfide bond</keyword>
<keyword id="KW-0496">Mitochondrion</keyword>
<keyword id="KW-0520">NAD</keyword>
<keyword id="KW-0560">Oxidoreductase</keyword>
<keyword id="KW-1185">Reference proteome</keyword>
<keyword id="KW-0809">Transit peptide</keyword>
<dbReference type="EC" id="1.2.1.24"/>
<dbReference type="EMBL" id="AP008208">
    <property type="protein sequence ID" value="BAH91555.1"/>
    <property type="status" value="ALT_SEQ"/>
    <property type="molecule type" value="Genomic_DNA"/>
</dbReference>
<dbReference type="EMBL" id="AP014958">
    <property type="status" value="NOT_ANNOTATED_CDS"/>
    <property type="molecule type" value="Genomic_DNA"/>
</dbReference>
<dbReference type="EMBL" id="CM000139">
    <property type="protein sequence ID" value="EEE56414.1"/>
    <property type="molecule type" value="Genomic_DNA"/>
</dbReference>
<dbReference type="RefSeq" id="XP_015627266.1">
    <property type="nucleotide sequence ID" value="XM_015771780.1"/>
</dbReference>
<dbReference type="SMR" id="B9F3B6"/>
<dbReference type="FunCoup" id="B9F3B6">
    <property type="interactions" value="1420"/>
</dbReference>
<dbReference type="STRING" id="39947.B9F3B6"/>
<dbReference type="PaxDb" id="39947-B9F3B6"/>
<dbReference type="KEGG" id="dosa:Os02g0173900"/>
<dbReference type="eggNOG" id="KOG2451">
    <property type="taxonomic scope" value="Eukaryota"/>
</dbReference>
<dbReference type="HOGENOM" id="CLU_005391_6_0_1"/>
<dbReference type="InParanoid" id="B9F3B6"/>
<dbReference type="OrthoDB" id="310895at2759"/>
<dbReference type="PlantReactome" id="R-OSA-1119337">
    <property type="pathway name" value="Proline degradation"/>
</dbReference>
<dbReference type="PlantReactome" id="R-OSA-1119458">
    <property type="pathway name" value="Glutamate degradation"/>
</dbReference>
<dbReference type="UniPathway" id="UPA00733"/>
<dbReference type="Proteomes" id="UP000000763">
    <property type="component" value="Chromosome 2"/>
</dbReference>
<dbReference type="Proteomes" id="UP000007752">
    <property type="component" value="Chromosome 2"/>
</dbReference>
<dbReference type="Proteomes" id="UP000059680">
    <property type="component" value="Chromosome 2"/>
</dbReference>
<dbReference type="GO" id="GO:0005759">
    <property type="term" value="C:mitochondrial matrix"/>
    <property type="evidence" value="ECO:0007669"/>
    <property type="project" value="UniProtKB-SubCell"/>
</dbReference>
<dbReference type="GO" id="GO:0004777">
    <property type="term" value="F:succinate-semialdehyde dehydrogenase (NAD+) activity"/>
    <property type="evidence" value="ECO:0000318"/>
    <property type="project" value="GO_Central"/>
</dbReference>
<dbReference type="GO" id="GO:0009450">
    <property type="term" value="P:gamma-aminobutyric acid catabolic process"/>
    <property type="evidence" value="ECO:0000318"/>
    <property type="project" value="GO_Central"/>
</dbReference>
<dbReference type="CDD" id="cd07103">
    <property type="entry name" value="ALDH_F5_SSADH_GabD"/>
    <property type="match status" value="1"/>
</dbReference>
<dbReference type="FunFam" id="3.40.605.10:FF:000026">
    <property type="entry name" value="Aldehyde dehydrogenase, putative"/>
    <property type="match status" value="1"/>
</dbReference>
<dbReference type="FunFam" id="3.40.309.10:FF:000004">
    <property type="entry name" value="Succinate-semialdehyde dehydrogenase I"/>
    <property type="match status" value="1"/>
</dbReference>
<dbReference type="FunFam" id="3.40.605.10:FF:000005">
    <property type="entry name" value="Succinate-semialdehyde dehydrogenase I"/>
    <property type="match status" value="1"/>
</dbReference>
<dbReference type="Gene3D" id="3.40.605.10">
    <property type="entry name" value="Aldehyde Dehydrogenase, Chain A, domain 1"/>
    <property type="match status" value="1"/>
</dbReference>
<dbReference type="Gene3D" id="3.40.309.10">
    <property type="entry name" value="Aldehyde Dehydrogenase, Chain A, domain 2"/>
    <property type="match status" value="1"/>
</dbReference>
<dbReference type="InterPro" id="IPR016161">
    <property type="entry name" value="Ald_DH/histidinol_DH"/>
</dbReference>
<dbReference type="InterPro" id="IPR016163">
    <property type="entry name" value="Ald_DH_C"/>
</dbReference>
<dbReference type="InterPro" id="IPR016160">
    <property type="entry name" value="Ald_DH_CS_CYS"/>
</dbReference>
<dbReference type="InterPro" id="IPR029510">
    <property type="entry name" value="Ald_DH_CS_GLU"/>
</dbReference>
<dbReference type="InterPro" id="IPR016162">
    <property type="entry name" value="Ald_DH_N"/>
</dbReference>
<dbReference type="InterPro" id="IPR015590">
    <property type="entry name" value="Aldehyde_DH_dom"/>
</dbReference>
<dbReference type="InterPro" id="IPR050740">
    <property type="entry name" value="Aldehyde_DH_Superfamily"/>
</dbReference>
<dbReference type="InterPro" id="IPR010102">
    <property type="entry name" value="Succ_semiAld_DH"/>
</dbReference>
<dbReference type="NCBIfam" id="TIGR01780">
    <property type="entry name" value="SSADH"/>
    <property type="match status" value="1"/>
</dbReference>
<dbReference type="PANTHER" id="PTHR43353">
    <property type="entry name" value="SUCCINATE-SEMIALDEHYDE DEHYDROGENASE, MITOCHONDRIAL"/>
    <property type="match status" value="1"/>
</dbReference>
<dbReference type="PANTHER" id="PTHR43353:SF5">
    <property type="entry name" value="SUCCINATE-SEMIALDEHYDE DEHYDROGENASE, MITOCHONDRIAL"/>
    <property type="match status" value="1"/>
</dbReference>
<dbReference type="Pfam" id="PF00171">
    <property type="entry name" value="Aldedh"/>
    <property type="match status" value="1"/>
</dbReference>
<dbReference type="SUPFAM" id="SSF53720">
    <property type="entry name" value="ALDH-like"/>
    <property type="match status" value="1"/>
</dbReference>
<dbReference type="PROSITE" id="PS00070">
    <property type="entry name" value="ALDEHYDE_DEHYDR_CYS"/>
    <property type="match status" value="1"/>
</dbReference>
<dbReference type="PROSITE" id="PS00687">
    <property type="entry name" value="ALDEHYDE_DEHYDR_GLU"/>
    <property type="match status" value="1"/>
</dbReference>
<protein>
    <recommendedName>
        <fullName>Succinate-semialdehyde dehydrogenase, mitochondrial</fullName>
        <ecNumber>1.2.1.24</ecNumber>
    </recommendedName>
    <alternativeName>
        <fullName>Aldehyde dehydrogenase family 5 member F1</fullName>
    </alternativeName>
    <alternativeName>
        <fullName>NAD(+)-dependent succinic semialdehyde dehydrogenase</fullName>
    </alternativeName>
</protein>
<proteinExistence type="inferred from homology"/>
<evidence type="ECO:0000250" key="1"/>
<evidence type="ECO:0000255" key="2"/>
<evidence type="ECO:0000255" key="3">
    <source>
        <dbReference type="PROSITE-ProRule" id="PRU10007"/>
    </source>
</evidence>
<evidence type="ECO:0000255" key="4">
    <source>
        <dbReference type="PROSITE-ProRule" id="PRU10008"/>
    </source>
</evidence>
<evidence type="ECO:0000305" key="5"/>
<name>SSDH_ORYSJ</name>
<reference key="1">
    <citation type="journal article" date="2005" name="Nature">
        <title>The map-based sequence of the rice genome.</title>
        <authorList>
            <consortium name="International rice genome sequencing project (IRGSP)"/>
        </authorList>
    </citation>
    <scope>NUCLEOTIDE SEQUENCE [LARGE SCALE GENOMIC DNA]</scope>
    <source>
        <strain>cv. Nipponbare</strain>
    </source>
</reference>
<reference key="2">
    <citation type="journal article" date="2008" name="Nucleic Acids Res.">
        <title>The rice annotation project database (RAP-DB): 2008 update.</title>
        <authorList>
            <consortium name="The rice annotation project (RAP)"/>
        </authorList>
    </citation>
    <scope>GENOME REANNOTATION</scope>
    <source>
        <strain>cv. Nipponbare</strain>
    </source>
</reference>
<reference key="3">
    <citation type="journal article" date="2013" name="Rice">
        <title>Improvement of the Oryza sativa Nipponbare reference genome using next generation sequence and optical map data.</title>
        <authorList>
            <person name="Kawahara Y."/>
            <person name="de la Bastide M."/>
            <person name="Hamilton J.P."/>
            <person name="Kanamori H."/>
            <person name="McCombie W.R."/>
            <person name="Ouyang S."/>
            <person name="Schwartz D.C."/>
            <person name="Tanaka T."/>
            <person name="Wu J."/>
            <person name="Zhou S."/>
            <person name="Childs K.L."/>
            <person name="Davidson R.M."/>
            <person name="Lin H."/>
            <person name="Quesada-Ocampo L."/>
            <person name="Vaillancourt B."/>
            <person name="Sakai H."/>
            <person name="Lee S.S."/>
            <person name="Kim J."/>
            <person name="Numa H."/>
            <person name="Itoh T."/>
            <person name="Buell C.R."/>
            <person name="Matsumoto T."/>
        </authorList>
    </citation>
    <scope>GENOME REANNOTATION</scope>
    <source>
        <strain>cv. Nipponbare</strain>
    </source>
</reference>
<reference key="4">
    <citation type="journal article" date="2005" name="PLoS Biol.">
        <title>The genomes of Oryza sativa: a history of duplications.</title>
        <authorList>
            <person name="Yu J."/>
            <person name="Wang J."/>
            <person name="Lin W."/>
            <person name="Li S."/>
            <person name="Li H."/>
            <person name="Zhou J."/>
            <person name="Ni P."/>
            <person name="Dong W."/>
            <person name="Hu S."/>
            <person name="Zeng C."/>
            <person name="Zhang J."/>
            <person name="Zhang Y."/>
            <person name="Li R."/>
            <person name="Xu Z."/>
            <person name="Li S."/>
            <person name="Li X."/>
            <person name="Zheng H."/>
            <person name="Cong L."/>
            <person name="Lin L."/>
            <person name="Yin J."/>
            <person name="Geng J."/>
            <person name="Li G."/>
            <person name="Shi J."/>
            <person name="Liu J."/>
            <person name="Lv H."/>
            <person name="Li J."/>
            <person name="Wang J."/>
            <person name="Deng Y."/>
            <person name="Ran L."/>
            <person name="Shi X."/>
            <person name="Wang X."/>
            <person name="Wu Q."/>
            <person name="Li C."/>
            <person name="Ren X."/>
            <person name="Wang J."/>
            <person name="Wang X."/>
            <person name="Li D."/>
            <person name="Liu D."/>
            <person name="Zhang X."/>
            <person name="Ji Z."/>
            <person name="Zhao W."/>
            <person name="Sun Y."/>
            <person name="Zhang Z."/>
            <person name="Bao J."/>
            <person name="Han Y."/>
            <person name="Dong L."/>
            <person name="Ji J."/>
            <person name="Chen P."/>
            <person name="Wu S."/>
            <person name="Liu J."/>
            <person name="Xiao Y."/>
            <person name="Bu D."/>
            <person name="Tan J."/>
            <person name="Yang L."/>
            <person name="Ye C."/>
            <person name="Zhang J."/>
            <person name="Xu J."/>
            <person name="Zhou Y."/>
            <person name="Yu Y."/>
            <person name="Zhang B."/>
            <person name="Zhuang S."/>
            <person name="Wei H."/>
            <person name="Liu B."/>
            <person name="Lei M."/>
            <person name="Yu H."/>
            <person name="Li Y."/>
            <person name="Xu H."/>
            <person name="Wei S."/>
            <person name="He X."/>
            <person name="Fang L."/>
            <person name="Zhang Z."/>
            <person name="Zhang Y."/>
            <person name="Huang X."/>
            <person name="Su Z."/>
            <person name="Tong W."/>
            <person name="Li J."/>
            <person name="Tong Z."/>
            <person name="Li S."/>
            <person name="Ye J."/>
            <person name="Wang L."/>
            <person name="Fang L."/>
            <person name="Lei T."/>
            <person name="Chen C.-S."/>
            <person name="Chen H.-C."/>
            <person name="Xu Z."/>
            <person name="Li H."/>
            <person name="Huang H."/>
            <person name="Zhang F."/>
            <person name="Xu H."/>
            <person name="Li N."/>
            <person name="Zhao C."/>
            <person name="Li S."/>
            <person name="Dong L."/>
            <person name="Huang Y."/>
            <person name="Li L."/>
            <person name="Xi Y."/>
            <person name="Qi Q."/>
            <person name="Li W."/>
            <person name="Zhang B."/>
            <person name="Hu W."/>
            <person name="Zhang Y."/>
            <person name="Tian X."/>
            <person name="Jiao Y."/>
            <person name="Liang X."/>
            <person name="Jin J."/>
            <person name="Gao L."/>
            <person name="Zheng W."/>
            <person name="Hao B."/>
            <person name="Liu S.-M."/>
            <person name="Wang W."/>
            <person name="Yuan L."/>
            <person name="Cao M."/>
            <person name="McDermott J."/>
            <person name="Samudrala R."/>
            <person name="Wang J."/>
            <person name="Wong G.K.-S."/>
            <person name="Yang H."/>
        </authorList>
    </citation>
    <scope>NUCLEOTIDE SEQUENCE [LARGE SCALE GENOMIC DNA]</scope>
    <source>
        <strain>cv. Nipponbare</strain>
    </source>
</reference>